<sequence>MHSRFQAALTTLAADLQAAIAPMLADPHFPALLEADQVATLQQATGLDEDALAFALLPLAAACARADLSHFNVGAIARGVSGRWYFGGNMEFLGATMQQTVHAEQSAISHAWLRGETSLRAITVNYTPCGHCRQFMNELNSGLALRIHLPGREAHALEHYLPDAFGPKDLEIKTLLMDAQDHGFPVSGDALTQAAIQAANRCHAPYSHSPSGVALELKDGTIFSGSYAENAAFNPTLPPLQGALNLLSLNGYDYPAIQRAILAEKADAALIQWDATVATLKALGCQNIERVLLG</sequence>
<organism>
    <name type="scientific">Klebsiella pneumoniae (strain 342)</name>
    <dbReference type="NCBI Taxonomy" id="507522"/>
    <lineage>
        <taxon>Bacteria</taxon>
        <taxon>Pseudomonadati</taxon>
        <taxon>Pseudomonadota</taxon>
        <taxon>Gammaproteobacteria</taxon>
        <taxon>Enterobacterales</taxon>
        <taxon>Enterobacteriaceae</taxon>
        <taxon>Klebsiella/Raoultella group</taxon>
        <taxon>Klebsiella</taxon>
        <taxon>Klebsiella pneumoniae complex</taxon>
    </lineage>
</organism>
<name>CDD_KLEP3</name>
<feature type="chain" id="PRO_1000147105" description="Cytidine deaminase">
    <location>
        <begin position="1"/>
        <end position="294"/>
    </location>
</feature>
<feature type="domain" description="CMP/dCMP-type deaminase 1" evidence="2">
    <location>
        <begin position="48"/>
        <end position="168"/>
    </location>
</feature>
<feature type="domain" description="CMP/dCMP-type deaminase 2" evidence="2">
    <location>
        <begin position="186"/>
        <end position="294"/>
    </location>
</feature>
<feature type="active site" description="Proton donor" evidence="1">
    <location>
        <position position="104"/>
    </location>
</feature>
<feature type="binding site" evidence="1">
    <location>
        <begin position="89"/>
        <end position="91"/>
    </location>
    <ligand>
        <name>substrate</name>
    </ligand>
</feature>
<feature type="binding site" evidence="1">
    <location>
        <position position="102"/>
    </location>
    <ligand>
        <name>Zn(2+)</name>
        <dbReference type="ChEBI" id="CHEBI:29105"/>
        <note>catalytic</note>
    </ligand>
</feature>
<feature type="binding site" evidence="1">
    <location>
        <position position="129"/>
    </location>
    <ligand>
        <name>Zn(2+)</name>
        <dbReference type="ChEBI" id="CHEBI:29105"/>
        <note>catalytic</note>
    </ligand>
</feature>
<feature type="binding site" evidence="1">
    <location>
        <position position="132"/>
    </location>
    <ligand>
        <name>Zn(2+)</name>
        <dbReference type="ChEBI" id="CHEBI:29105"/>
        <note>catalytic</note>
    </ligand>
</feature>
<evidence type="ECO:0000255" key="1">
    <source>
        <dbReference type="HAMAP-Rule" id="MF_01558"/>
    </source>
</evidence>
<evidence type="ECO:0000255" key="2">
    <source>
        <dbReference type="PROSITE-ProRule" id="PRU01083"/>
    </source>
</evidence>
<keyword id="KW-0378">Hydrolase</keyword>
<keyword id="KW-0479">Metal-binding</keyword>
<keyword id="KW-0862">Zinc</keyword>
<reference key="1">
    <citation type="journal article" date="2008" name="PLoS Genet.">
        <title>Complete genome sequence of the N2-fixing broad host range endophyte Klebsiella pneumoniae 342 and virulence predictions verified in mice.</title>
        <authorList>
            <person name="Fouts D.E."/>
            <person name="Tyler H.L."/>
            <person name="DeBoy R.T."/>
            <person name="Daugherty S."/>
            <person name="Ren Q."/>
            <person name="Badger J.H."/>
            <person name="Durkin A.S."/>
            <person name="Huot H."/>
            <person name="Shrivastava S."/>
            <person name="Kothari S."/>
            <person name="Dodson R.J."/>
            <person name="Mohamoud Y."/>
            <person name="Khouri H."/>
            <person name="Roesch L.F.W."/>
            <person name="Krogfelt K.A."/>
            <person name="Struve C."/>
            <person name="Triplett E.W."/>
            <person name="Methe B.A."/>
        </authorList>
    </citation>
    <scope>NUCLEOTIDE SEQUENCE [LARGE SCALE GENOMIC DNA]</scope>
    <source>
        <strain>342</strain>
    </source>
</reference>
<accession>B5XP65</accession>
<comment type="function">
    <text evidence="1">This enzyme scavenges exogenous and endogenous cytidine and 2'-deoxycytidine for UMP synthesis.</text>
</comment>
<comment type="catalytic activity">
    <reaction evidence="1">
        <text>cytidine + H2O + H(+) = uridine + NH4(+)</text>
        <dbReference type="Rhea" id="RHEA:16069"/>
        <dbReference type="ChEBI" id="CHEBI:15377"/>
        <dbReference type="ChEBI" id="CHEBI:15378"/>
        <dbReference type="ChEBI" id="CHEBI:16704"/>
        <dbReference type="ChEBI" id="CHEBI:17562"/>
        <dbReference type="ChEBI" id="CHEBI:28938"/>
        <dbReference type="EC" id="3.5.4.5"/>
    </reaction>
</comment>
<comment type="catalytic activity">
    <reaction evidence="1">
        <text>2'-deoxycytidine + H2O + H(+) = 2'-deoxyuridine + NH4(+)</text>
        <dbReference type="Rhea" id="RHEA:13433"/>
        <dbReference type="ChEBI" id="CHEBI:15377"/>
        <dbReference type="ChEBI" id="CHEBI:15378"/>
        <dbReference type="ChEBI" id="CHEBI:15698"/>
        <dbReference type="ChEBI" id="CHEBI:16450"/>
        <dbReference type="ChEBI" id="CHEBI:28938"/>
        <dbReference type="EC" id="3.5.4.5"/>
    </reaction>
</comment>
<comment type="cofactor">
    <cofactor evidence="1">
        <name>Zn(2+)</name>
        <dbReference type="ChEBI" id="CHEBI:29105"/>
    </cofactor>
    <text evidence="1">Binds 1 zinc ion.</text>
</comment>
<comment type="subunit">
    <text evidence="1">Homodimer.</text>
</comment>
<comment type="similarity">
    <text evidence="1">Belongs to the cytidine and deoxycytidylate deaminase family.</text>
</comment>
<proteinExistence type="inferred from homology"/>
<dbReference type="EC" id="3.5.4.5" evidence="1"/>
<dbReference type="EMBL" id="CP000964">
    <property type="protein sequence ID" value="ACI09875.1"/>
    <property type="molecule type" value="Genomic_DNA"/>
</dbReference>
<dbReference type="SMR" id="B5XP65"/>
<dbReference type="KEGG" id="kpe:KPK_1584"/>
<dbReference type="HOGENOM" id="CLU_052424_0_0_6"/>
<dbReference type="Proteomes" id="UP000001734">
    <property type="component" value="Chromosome"/>
</dbReference>
<dbReference type="GO" id="GO:0005829">
    <property type="term" value="C:cytosol"/>
    <property type="evidence" value="ECO:0007669"/>
    <property type="project" value="TreeGrafter"/>
</dbReference>
<dbReference type="GO" id="GO:0004126">
    <property type="term" value="F:cytidine deaminase activity"/>
    <property type="evidence" value="ECO:0007669"/>
    <property type="project" value="UniProtKB-UniRule"/>
</dbReference>
<dbReference type="GO" id="GO:0042802">
    <property type="term" value="F:identical protein binding"/>
    <property type="evidence" value="ECO:0007669"/>
    <property type="project" value="UniProtKB-ARBA"/>
</dbReference>
<dbReference type="GO" id="GO:0008270">
    <property type="term" value="F:zinc ion binding"/>
    <property type="evidence" value="ECO:0007669"/>
    <property type="project" value="UniProtKB-UniRule"/>
</dbReference>
<dbReference type="GO" id="GO:0009972">
    <property type="term" value="P:cytidine deamination"/>
    <property type="evidence" value="ECO:0007669"/>
    <property type="project" value="InterPro"/>
</dbReference>
<dbReference type="CDD" id="cd01283">
    <property type="entry name" value="cytidine_deaminase"/>
    <property type="match status" value="2"/>
</dbReference>
<dbReference type="FunFam" id="3.40.140.10:FF:000006">
    <property type="entry name" value="Cytidine deaminase"/>
    <property type="match status" value="1"/>
</dbReference>
<dbReference type="FunFam" id="3.40.140.10:FF:000007">
    <property type="entry name" value="Cytidine deaminase"/>
    <property type="match status" value="1"/>
</dbReference>
<dbReference type="Gene3D" id="3.40.140.10">
    <property type="entry name" value="Cytidine Deaminase, domain 2"/>
    <property type="match status" value="2"/>
</dbReference>
<dbReference type="HAMAP" id="MF_01558">
    <property type="entry name" value="Cyt_deam"/>
    <property type="match status" value="1"/>
</dbReference>
<dbReference type="InterPro" id="IPR016192">
    <property type="entry name" value="APOBEC/CMP_deaminase_Zn-bd"/>
</dbReference>
<dbReference type="InterPro" id="IPR002125">
    <property type="entry name" value="CMP_dCMP_dom"/>
</dbReference>
<dbReference type="InterPro" id="IPR013171">
    <property type="entry name" value="Cyd/dCyd_deaminase_Zn-bd"/>
</dbReference>
<dbReference type="InterPro" id="IPR050202">
    <property type="entry name" value="Cyt/Deoxycyt_deaminase"/>
</dbReference>
<dbReference type="InterPro" id="IPR006263">
    <property type="entry name" value="Cyt_deam_dimer"/>
</dbReference>
<dbReference type="InterPro" id="IPR016193">
    <property type="entry name" value="Cytidine_deaminase-like"/>
</dbReference>
<dbReference type="InterPro" id="IPR020797">
    <property type="entry name" value="Cytidine_deaminase_bacteria"/>
</dbReference>
<dbReference type="NCBIfam" id="TIGR01355">
    <property type="entry name" value="cyt_deam_dimer"/>
    <property type="match status" value="1"/>
</dbReference>
<dbReference type="NCBIfam" id="NF006537">
    <property type="entry name" value="PRK09027.1"/>
    <property type="match status" value="1"/>
</dbReference>
<dbReference type="PANTHER" id="PTHR11644">
    <property type="entry name" value="CYTIDINE DEAMINASE"/>
    <property type="match status" value="1"/>
</dbReference>
<dbReference type="PANTHER" id="PTHR11644:SF2">
    <property type="entry name" value="CYTIDINE DEAMINASE"/>
    <property type="match status" value="1"/>
</dbReference>
<dbReference type="Pfam" id="PF00383">
    <property type="entry name" value="dCMP_cyt_deam_1"/>
    <property type="match status" value="1"/>
</dbReference>
<dbReference type="Pfam" id="PF08211">
    <property type="entry name" value="dCMP_cyt_deam_2"/>
    <property type="match status" value="1"/>
</dbReference>
<dbReference type="PIRSF" id="PIRSF006334">
    <property type="entry name" value="Cdd_plus_pseudo"/>
    <property type="match status" value="1"/>
</dbReference>
<dbReference type="SUPFAM" id="SSF53927">
    <property type="entry name" value="Cytidine deaminase-like"/>
    <property type="match status" value="2"/>
</dbReference>
<dbReference type="PROSITE" id="PS00903">
    <property type="entry name" value="CYT_DCMP_DEAMINASES_1"/>
    <property type="match status" value="1"/>
</dbReference>
<dbReference type="PROSITE" id="PS51747">
    <property type="entry name" value="CYT_DCMP_DEAMINASES_2"/>
    <property type="match status" value="2"/>
</dbReference>
<protein>
    <recommendedName>
        <fullName evidence="1">Cytidine deaminase</fullName>
        <ecNumber evidence="1">3.5.4.5</ecNumber>
    </recommendedName>
    <alternativeName>
        <fullName evidence="1">Cytidine aminohydrolase</fullName>
        <shortName evidence="1">CDA</shortName>
    </alternativeName>
</protein>
<gene>
    <name evidence="1" type="primary">cdd</name>
    <name type="ordered locus">KPK_1584</name>
</gene>